<sequence length="470" mass="50792">MTELPDNTRWQLWIVAFGFFMQSLDTTIVNTALPSMAKSLGESPLHMHMVVVSYVLTVAVMLPASGWLADKIGVRNIFFAAIVLFTLGSLFCALSGTLNQLVLARVLQGVGGAMMVPVGRLTVMKIVPRAQYMAAMTFVTLPGQIGPLLGPALGGVLVEYASWHWIFLINIPVGIVGAMATFMLMPNYIIETRRFDLPGFLLLAIGMAVLTLALDGSKSMGISPWTLAGLAAGGAAAILLYLFHAKKNSGALFSLRLFRTPTFSLGLLGSFAGRIGSGMLPFMTPVFLQIGLGFSPFHAGLMMIPMVLGSMGMKRIVVQIVNRFGYRRVLVATTLGLALVSLLFMSVALLGWYYLLPLVLLLQGMVNSARFSSMNTLTLKDLPDTLASSGNSLLSMIMQLSMSIGVTIAGMLLGMFGQQHIGIDSSATHHVFMYTWLCMAVIIALPAIIFARVPNDTQQNMVISRRKRSL</sequence>
<proteinExistence type="inferred from homology"/>
<protein>
    <recommendedName>
        <fullName evidence="1">Putative multidrug resistance protein MdtD</fullName>
    </recommendedName>
</protein>
<comment type="subcellular location">
    <subcellularLocation>
        <location evidence="1">Cell inner membrane</location>
        <topology evidence="1">Multi-pass membrane protein</topology>
    </subcellularLocation>
</comment>
<comment type="similarity">
    <text evidence="1">Belongs to the major facilitator superfamily. TCR/Tet family.</text>
</comment>
<evidence type="ECO:0000255" key="1">
    <source>
        <dbReference type="HAMAP-Rule" id="MF_01577"/>
    </source>
</evidence>
<name>MDTD_SALTY</name>
<dbReference type="EMBL" id="AE006468">
    <property type="protein sequence ID" value="AAL21033.1"/>
    <property type="molecule type" value="Genomic_DNA"/>
</dbReference>
<dbReference type="RefSeq" id="WP_000137816.1">
    <property type="nucleotide sequence ID" value="NC_003197.2"/>
</dbReference>
<dbReference type="SMR" id="Q8ZNQ0"/>
<dbReference type="STRING" id="99287.STM2129"/>
<dbReference type="PaxDb" id="99287-STM2129"/>
<dbReference type="KEGG" id="stm:STM2129"/>
<dbReference type="PATRIC" id="fig|99287.12.peg.2254"/>
<dbReference type="HOGENOM" id="CLU_000960_28_0_6"/>
<dbReference type="OMA" id="GCTMMPL"/>
<dbReference type="PhylomeDB" id="Q8ZNQ0"/>
<dbReference type="BioCyc" id="SENT99287:STM2129-MONOMER"/>
<dbReference type="Proteomes" id="UP000001014">
    <property type="component" value="Chromosome"/>
</dbReference>
<dbReference type="GO" id="GO:0005886">
    <property type="term" value="C:plasma membrane"/>
    <property type="evidence" value="ECO:0000318"/>
    <property type="project" value="GO_Central"/>
</dbReference>
<dbReference type="GO" id="GO:0022857">
    <property type="term" value="F:transmembrane transporter activity"/>
    <property type="evidence" value="ECO:0000318"/>
    <property type="project" value="GO_Central"/>
</dbReference>
<dbReference type="GO" id="GO:0055085">
    <property type="term" value="P:transmembrane transport"/>
    <property type="evidence" value="ECO:0000318"/>
    <property type="project" value="GO_Central"/>
</dbReference>
<dbReference type="CDD" id="cd17503">
    <property type="entry name" value="MFS_LmrB_MDR_like"/>
    <property type="match status" value="1"/>
</dbReference>
<dbReference type="FunFam" id="1.20.1250.20:FF:000021">
    <property type="entry name" value="Putative multidrug resistance protein MdtD"/>
    <property type="match status" value="1"/>
</dbReference>
<dbReference type="FunFam" id="1.20.1720.10:FF:000001">
    <property type="entry name" value="Putative multidrug resistance protein MdtD"/>
    <property type="match status" value="1"/>
</dbReference>
<dbReference type="Gene3D" id="1.20.1250.20">
    <property type="entry name" value="MFS general substrate transporter like domains"/>
    <property type="match status" value="1"/>
</dbReference>
<dbReference type="Gene3D" id="1.20.1720.10">
    <property type="entry name" value="Multidrug resistance protein D"/>
    <property type="match status" value="1"/>
</dbReference>
<dbReference type="HAMAP" id="MF_01577">
    <property type="entry name" value="MFS_MdtD"/>
    <property type="match status" value="1"/>
</dbReference>
<dbReference type="InterPro" id="IPR011701">
    <property type="entry name" value="MFS"/>
</dbReference>
<dbReference type="InterPro" id="IPR020846">
    <property type="entry name" value="MFS_dom"/>
</dbReference>
<dbReference type="InterPro" id="IPR036259">
    <property type="entry name" value="MFS_trans_sf"/>
</dbReference>
<dbReference type="InterPro" id="IPR023721">
    <property type="entry name" value="Multi-R_MdtD"/>
</dbReference>
<dbReference type="NCBIfam" id="NF007799">
    <property type="entry name" value="PRK10504.1"/>
    <property type="match status" value="1"/>
</dbReference>
<dbReference type="PANTHER" id="PTHR42718:SF46">
    <property type="entry name" value="BLR6921 PROTEIN"/>
    <property type="match status" value="1"/>
</dbReference>
<dbReference type="PANTHER" id="PTHR42718">
    <property type="entry name" value="MAJOR FACILITATOR SUPERFAMILY MULTIDRUG TRANSPORTER MFSC"/>
    <property type="match status" value="1"/>
</dbReference>
<dbReference type="Pfam" id="PF07690">
    <property type="entry name" value="MFS_1"/>
    <property type="match status" value="1"/>
</dbReference>
<dbReference type="PRINTS" id="PR01036">
    <property type="entry name" value="TCRTETB"/>
</dbReference>
<dbReference type="SUPFAM" id="SSF103473">
    <property type="entry name" value="MFS general substrate transporter"/>
    <property type="match status" value="1"/>
</dbReference>
<dbReference type="PROSITE" id="PS50850">
    <property type="entry name" value="MFS"/>
    <property type="match status" value="1"/>
</dbReference>
<feature type="chain" id="PRO_0000268598" description="Putative multidrug resistance protein MdtD">
    <location>
        <begin position="1"/>
        <end position="470"/>
    </location>
</feature>
<feature type="topological domain" description="Periplasmic" evidence="1">
    <location>
        <begin position="1"/>
        <end position="11"/>
    </location>
</feature>
<feature type="transmembrane region" description="Helical" evidence="1">
    <location>
        <begin position="12"/>
        <end position="32"/>
    </location>
</feature>
<feature type="topological domain" description="Cytoplasmic" evidence="1">
    <location>
        <begin position="33"/>
        <end position="48"/>
    </location>
</feature>
<feature type="transmembrane region" description="Helical" evidence="1">
    <location>
        <begin position="49"/>
        <end position="69"/>
    </location>
</feature>
<feature type="topological domain" description="Periplasmic" evidence="1">
    <location>
        <begin position="70"/>
        <end position="76"/>
    </location>
</feature>
<feature type="transmembrane region" description="Helical" evidence="1">
    <location>
        <begin position="77"/>
        <end position="97"/>
    </location>
</feature>
<feature type="topological domain" description="Cytoplasmic" evidence="1">
    <location>
        <begin position="98"/>
        <end position="101"/>
    </location>
</feature>
<feature type="transmembrane region" description="Helical" evidence="1">
    <location>
        <begin position="102"/>
        <end position="124"/>
    </location>
</feature>
<feature type="topological domain" description="Periplasmic" evidence="1">
    <location>
        <begin position="125"/>
        <end position="137"/>
    </location>
</feature>
<feature type="transmembrane region" description="Helical" evidence="1">
    <location>
        <begin position="138"/>
        <end position="158"/>
    </location>
</feature>
<feature type="topological domain" description="Cytoplasmic" evidence="1">
    <location>
        <begin position="159"/>
        <end position="164"/>
    </location>
</feature>
<feature type="transmembrane region" description="Helical" evidence="1">
    <location>
        <begin position="165"/>
        <end position="185"/>
    </location>
</feature>
<feature type="topological domain" description="Periplasmic" evidence="1">
    <location>
        <begin position="186"/>
        <end position="196"/>
    </location>
</feature>
<feature type="transmembrane region" description="Helical" evidence="1">
    <location>
        <begin position="197"/>
        <end position="217"/>
    </location>
</feature>
<feature type="topological domain" description="Cytoplasmic" evidence="1">
    <location>
        <begin position="218"/>
        <end position="224"/>
    </location>
</feature>
<feature type="transmembrane region" description="Helical" evidence="1">
    <location>
        <begin position="225"/>
        <end position="245"/>
    </location>
</feature>
<feature type="topological domain" description="Periplasmic" evidence="1">
    <location>
        <begin position="246"/>
        <end position="262"/>
    </location>
</feature>
<feature type="transmembrane region" description="Helical" evidence="1">
    <location>
        <begin position="263"/>
        <end position="283"/>
    </location>
</feature>
<feature type="topological domain" description="Cytoplasmic" evidence="1">
    <location>
        <begin position="284"/>
        <end position="285"/>
    </location>
</feature>
<feature type="transmembrane region" description="Helical" evidence="1">
    <location>
        <begin position="286"/>
        <end position="306"/>
    </location>
</feature>
<feature type="topological domain" description="Periplasmic" evidence="1">
    <location>
        <begin position="307"/>
        <end position="341"/>
    </location>
</feature>
<feature type="transmembrane region" description="Helical" evidence="1">
    <location>
        <begin position="342"/>
        <end position="362"/>
    </location>
</feature>
<feature type="topological domain" description="Cytoplasmic" evidence="1">
    <location>
        <begin position="363"/>
        <end position="395"/>
    </location>
</feature>
<feature type="transmembrane region" description="Helical" evidence="1">
    <location>
        <begin position="396"/>
        <end position="416"/>
    </location>
</feature>
<feature type="topological domain" description="Periplasmic" evidence="1">
    <location>
        <begin position="417"/>
        <end position="430"/>
    </location>
</feature>
<feature type="transmembrane region" description="Helical" evidence="1">
    <location>
        <begin position="431"/>
        <end position="451"/>
    </location>
</feature>
<feature type="topological domain" description="Cytoplasmic" evidence="1">
    <location>
        <begin position="452"/>
        <end position="470"/>
    </location>
</feature>
<accession>Q8ZNQ0</accession>
<reference key="1">
    <citation type="journal article" date="2001" name="Nature">
        <title>Complete genome sequence of Salmonella enterica serovar Typhimurium LT2.</title>
        <authorList>
            <person name="McClelland M."/>
            <person name="Sanderson K.E."/>
            <person name="Spieth J."/>
            <person name="Clifton S.W."/>
            <person name="Latreille P."/>
            <person name="Courtney L."/>
            <person name="Porwollik S."/>
            <person name="Ali J."/>
            <person name="Dante M."/>
            <person name="Du F."/>
            <person name="Hou S."/>
            <person name="Layman D."/>
            <person name="Leonard S."/>
            <person name="Nguyen C."/>
            <person name="Scott K."/>
            <person name="Holmes A."/>
            <person name="Grewal N."/>
            <person name="Mulvaney E."/>
            <person name="Ryan E."/>
            <person name="Sun H."/>
            <person name="Florea L."/>
            <person name="Miller W."/>
            <person name="Stoneking T."/>
            <person name="Nhan M."/>
            <person name="Waterston R."/>
            <person name="Wilson R.K."/>
        </authorList>
    </citation>
    <scope>NUCLEOTIDE SEQUENCE [LARGE SCALE GENOMIC DNA]</scope>
    <source>
        <strain>LT2 / SGSC1412 / ATCC 700720</strain>
    </source>
</reference>
<keyword id="KW-0997">Cell inner membrane</keyword>
<keyword id="KW-1003">Cell membrane</keyword>
<keyword id="KW-0472">Membrane</keyword>
<keyword id="KW-1185">Reference proteome</keyword>
<keyword id="KW-0812">Transmembrane</keyword>
<keyword id="KW-1133">Transmembrane helix</keyword>
<keyword id="KW-0813">Transport</keyword>
<organism>
    <name type="scientific">Salmonella typhimurium (strain LT2 / SGSC1412 / ATCC 700720)</name>
    <dbReference type="NCBI Taxonomy" id="99287"/>
    <lineage>
        <taxon>Bacteria</taxon>
        <taxon>Pseudomonadati</taxon>
        <taxon>Pseudomonadota</taxon>
        <taxon>Gammaproteobacteria</taxon>
        <taxon>Enterobacterales</taxon>
        <taxon>Enterobacteriaceae</taxon>
        <taxon>Salmonella</taxon>
    </lineage>
</organism>
<gene>
    <name evidence="1" type="primary">mdtD</name>
    <name type="ordered locus">STM2129</name>
</gene>